<evidence type="ECO:0000255" key="1">
    <source>
        <dbReference type="HAMAP-Rule" id="MF_00102"/>
    </source>
</evidence>
<evidence type="ECO:0000305" key="2"/>
<protein>
    <recommendedName>
        <fullName evidence="1">4-hydroxy-tetrahydrodipicolinate reductase</fullName>
        <shortName evidence="1">HTPA reductase</shortName>
        <ecNumber evidence="1">1.17.1.8</ecNumber>
    </recommendedName>
</protein>
<comment type="function">
    <text evidence="1">Catalyzes the conversion of 4-hydroxy-tetrahydrodipicolinate (HTPA) to tetrahydrodipicolinate.</text>
</comment>
<comment type="catalytic activity">
    <reaction evidence="1">
        <text>(S)-2,3,4,5-tetrahydrodipicolinate + NAD(+) + H2O = (2S,4S)-4-hydroxy-2,3,4,5-tetrahydrodipicolinate + NADH + H(+)</text>
        <dbReference type="Rhea" id="RHEA:35323"/>
        <dbReference type="ChEBI" id="CHEBI:15377"/>
        <dbReference type="ChEBI" id="CHEBI:15378"/>
        <dbReference type="ChEBI" id="CHEBI:16845"/>
        <dbReference type="ChEBI" id="CHEBI:57540"/>
        <dbReference type="ChEBI" id="CHEBI:57945"/>
        <dbReference type="ChEBI" id="CHEBI:67139"/>
        <dbReference type="EC" id="1.17.1.8"/>
    </reaction>
</comment>
<comment type="catalytic activity">
    <reaction evidence="1">
        <text>(S)-2,3,4,5-tetrahydrodipicolinate + NADP(+) + H2O = (2S,4S)-4-hydroxy-2,3,4,5-tetrahydrodipicolinate + NADPH + H(+)</text>
        <dbReference type="Rhea" id="RHEA:35331"/>
        <dbReference type="ChEBI" id="CHEBI:15377"/>
        <dbReference type="ChEBI" id="CHEBI:15378"/>
        <dbReference type="ChEBI" id="CHEBI:16845"/>
        <dbReference type="ChEBI" id="CHEBI:57783"/>
        <dbReference type="ChEBI" id="CHEBI:58349"/>
        <dbReference type="ChEBI" id="CHEBI:67139"/>
        <dbReference type="EC" id="1.17.1.8"/>
    </reaction>
</comment>
<comment type="pathway">
    <text evidence="1">Amino-acid biosynthesis; L-lysine biosynthesis via DAP pathway; (S)-tetrahydrodipicolinate from L-aspartate: step 4/4.</text>
</comment>
<comment type="subcellular location">
    <subcellularLocation>
        <location evidence="1">Cytoplasm</location>
    </subcellularLocation>
</comment>
<comment type="similarity">
    <text evidence="1">Belongs to the DapB family.</text>
</comment>
<comment type="caution">
    <text evidence="2">Was originally thought to be a dihydrodipicolinate reductase (DHDPR), catalyzing the conversion of dihydrodipicolinate to tetrahydrodipicolinate. However, it was shown in E.coli that the substrate of the enzymatic reaction is not dihydrodipicolinate (DHDP) but in fact (2S,4S)-4-hydroxy-2,3,4,5-tetrahydrodipicolinic acid (HTPA), the product released by the DapA-catalyzed reaction.</text>
</comment>
<keyword id="KW-0028">Amino-acid biosynthesis</keyword>
<keyword id="KW-0963">Cytoplasm</keyword>
<keyword id="KW-0220">Diaminopimelate biosynthesis</keyword>
<keyword id="KW-0457">Lysine biosynthesis</keyword>
<keyword id="KW-0520">NAD</keyword>
<keyword id="KW-0521">NADP</keyword>
<keyword id="KW-0560">Oxidoreductase</keyword>
<accession>Q5X090</accession>
<gene>
    <name evidence="1" type="primary">dapB</name>
    <name type="ordered locus">lpl0131</name>
</gene>
<dbReference type="EC" id="1.17.1.8" evidence="1"/>
<dbReference type="EMBL" id="CR628337">
    <property type="protein sequence ID" value="CAH14361.1"/>
    <property type="molecule type" value="Genomic_DNA"/>
</dbReference>
<dbReference type="RefSeq" id="WP_011214411.1">
    <property type="nucleotide sequence ID" value="NC_006369.1"/>
</dbReference>
<dbReference type="SMR" id="Q5X090"/>
<dbReference type="KEGG" id="lpf:lpl0131"/>
<dbReference type="LegioList" id="lpl0131"/>
<dbReference type="HOGENOM" id="CLU_047479_0_1_6"/>
<dbReference type="UniPathway" id="UPA00034">
    <property type="reaction ID" value="UER00018"/>
</dbReference>
<dbReference type="Proteomes" id="UP000002517">
    <property type="component" value="Chromosome"/>
</dbReference>
<dbReference type="GO" id="GO:0005829">
    <property type="term" value="C:cytosol"/>
    <property type="evidence" value="ECO:0007669"/>
    <property type="project" value="TreeGrafter"/>
</dbReference>
<dbReference type="GO" id="GO:0008839">
    <property type="term" value="F:4-hydroxy-tetrahydrodipicolinate reductase"/>
    <property type="evidence" value="ECO:0007669"/>
    <property type="project" value="UniProtKB-EC"/>
</dbReference>
<dbReference type="GO" id="GO:0051287">
    <property type="term" value="F:NAD binding"/>
    <property type="evidence" value="ECO:0007669"/>
    <property type="project" value="UniProtKB-UniRule"/>
</dbReference>
<dbReference type="GO" id="GO:0050661">
    <property type="term" value="F:NADP binding"/>
    <property type="evidence" value="ECO:0007669"/>
    <property type="project" value="UniProtKB-UniRule"/>
</dbReference>
<dbReference type="GO" id="GO:0016726">
    <property type="term" value="F:oxidoreductase activity, acting on CH or CH2 groups, NAD or NADP as acceptor"/>
    <property type="evidence" value="ECO:0007669"/>
    <property type="project" value="UniProtKB-UniRule"/>
</dbReference>
<dbReference type="GO" id="GO:0019877">
    <property type="term" value="P:diaminopimelate biosynthetic process"/>
    <property type="evidence" value="ECO:0007669"/>
    <property type="project" value="UniProtKB-UniRule"/>
</dbReference>
<dbReference type="GO" id="GO:0009089">
    <property type="term" value="P:lysine biosynthetic process via diaminopimelate"/>
    <property type="evidence" value="ECO:0007669"/>
    <property type="project" value="UniProtKB-UniRule"/>
</dbReference>
<dbReference type="CDD" id="cd02274">
    <property type="entry name" value="DHDPR_N"/>
    <property type="match status" value="1"/>
</dbReference>
<dbReference type="FunFam" id="3.30.360.10:FF:000009">
    <property type="entry name" value="4-hydroxy-tetrahydrodipicolinate reductase"/>
    <property type="match status" value="1"/>
</dbReference>
<dbReference type="Gene3D" id="3.30.360.10">
    <property type="entry name" value="Dihydrodipicolinate Reductase, domain 2"/>
    <property type="match status" value="1"/>
</dbReference>
<dbReference type="Gene3D" id="3.40.50.720">
    <property type="entry name" value="NAD(P)-binding Rossmann-like Domain"/>
    <property type="match status" value="1"/>
</dbReference>
<dbReference type="HAMAP" id="MF_00102">
    <property type="entry name" value="DapB"/>
    <property type="match status" value="1"/>
</dbReference>
<dbReference type="InterPro" id="IPR022663">
    <property type="entry name" value="DapB_C"/>
</dbReference>
<dbReference type="InterPro" id="IPR000846">
    <property type="entry name" value="DapB_N"/>
</dbReference>
<dbReference type="InterPro" id="IPR022664">
    <property type="entry name" value="DapB_N_CS"/>
</dbReference>
<dbReference type="InterPro" id="IPR023940">
    <property type="entry name" value="DHDPR_bac"/>
</dbReference>
<dbReference type="InterPro" id="IPR036291">
    <property type="entry name" value="NAD(P)-bd_dom_sf"/>
</dbReference>
<dbReference type="NCBIfam" id="TIGR00036">
    <property type="entry name" value="dapB"/>
    <property type="match status" value="1"/>
</dbReference>
<dbReference type="PANTHER" id="PTHR20836:SF0">
    <property type="entry name" value="4-HYDROXY-TETRAHYDRODIPICOLINATE REDUCTASE 1, CHLOROPLASTIC-RELATED"/>
    <property type="match status" value="1"/>
</dbReference>
<dbReference type="PANTHER" id="PTHR20836">
    <property type="entry name" value="DIHYDRODIPICOLINATE REDUCTASE"/>
    <property type="match status" value="1"/>
</dbReference>
<dbReference type="Pfam" id="PF05173">
    <property type="entry name" value="DapB_C"/>
    <property type="match status" value="1"/>
</dbReference>
<dbReference type="Pfam" id="PF01113">
    <property type="entry name" value="DapB_N"/>
    <property type="match status" value="1"/>
</dbReference>
<dbReference type="PIRSF" id="PIRSF000161">
    <property type="entry name" value="DHPR"/>
    <property type="match status" value="1"/>
</dbReference>
<dbReference type="SUPFAM" id="SSF55347">
    <property type="entry name" value="Glyceraldehyde-3-phosphate dehydrogenase-like, C-terminal domain"/>
    <property type="match status" value="1"/>
</dbReference>
<dbReference type="SUPFAM" id="SSF51735">
    <property type="entry name" value="NAD(P)-binding Rossmann-fold domains"/>
    <property type="match status" value="1"/>
</dbReference>
<dbReference type="PROSITE" id="PS01298">
    <property type="entry name" value="DAPB"/>
    <property type="match status" value="1"/>
</dbReference>
<sequence>MRTRVIVNGANGKMGILACETLENHEQFEVVAKLSRQDNLGQSILDTKAQIVVDLTRADCVYENSLTIINHGARPVIGTSGLVETQIDELTKLCKIKQIGGIIAPNFSLGAILMMMLAAKASEYFSEVEIIEGHHQQKLDAPSGTALKTAEMMAAARKKPKNKLPLKELTPGARGGSHHDINIHSLRLPGLLARQEVLFGNIGETLSITHNSIDRRCFMPGIVLACQKVLNLTNLVYGLEHLL</sequence>
<organism>
    <name type="scientific">Legionella pneumophila (strain Lens)</name>
    <dbReference type="NCBI Taxonomy" id="297245"/>
    <lineage>
        <taxon>Bacteria</taxon>
        <taxon>Pseudomonadati</taxon>
        <taxon>Pseudomonadota</taxon>
        <taxon>Gammaproteobacteria</taxon>
        <taxon>Legionellales</taxon>
        <taxon>Legionellaceae</taxon>
        <taxon>Legionella</taxon>
    </lineage>
</organism>
<proteinExistence type="inferred from homology"/>
<name>DAPB_LEGPL</name>
<reference key="1">
    <citation type="journal article" date="2004" name="Nat. Genet.">
        <title>Evidence in the Legionella pneumophila genome for exploitation of host cell functions and high genome plasticity.</title>
        <authorList>
            <person name="Cazalet C."/>
            <person name="Rusniok C."/>
            <person name="Brueggemann H."/>
            <person name="Zidane N."/>
            <person name="Magnier A."/>
            <person name="Ma L."/>
            <person name="Tichit M."/>
            <person name="Jarraud S."/>
            <person name="Bouchier C."/>
            <person name="Vandenesch F."/>
            <person name="Kunst F."/>
            <person name="Etienne J."/>
            <person name="Glaser P."/>
            <person name="Buchrieser C."/>
        </authorList>
    </citation>
    <scope>NUCLEOTIDE SEQUENCE [LARGE SCALE GENOMIC DNA]</scope>
    <source>
        <strain>Lens</strain>
    </source>
</reference>
<feature type="chain" id="PRO_0000228358" description="4-hydroxy-tetrahydrodipicolinate reductase">
    <location>
        <begin position="1"/>
        <end position="243"/>
    </location>
</feature>
<feature type="active site" description="Proton donor/acceptor" evidence="1">
    <location>
        <position position="134"/>
    </location>
</feature>
<feature type="active site" description="Proton donor" evidence="1">
    <location>
        <position position="138"/>
    </location>
</feature>
<feature type="binding site" evidence="1">
    <location>
        <begin position="9"/>
        <end position="14"/>
    </location>
    <ligand>
        <name>NAD(+)</name>
        <dbReference type="ChEBI" id="CHEBI:57540"/>
    </ligand>
</feature>
<feature type="binding site" evidence="1">
    <location>
        <begin position="78"/>
        <end position="80"/>
    </location>
    <ligand>
        <name>NAD(+)</name>
        <dbReference type="ChEBI" id="CHEBI:57540"/>
    </ligand>
</feature>
<feature type="binding site" evidence="1">
    <location>
        <begin position="104"/>
        <end position="107"/>
    </location>
    <ligand>
        <name>NAD(+)</name>
        <dbReference type="ChEBI" id="CHEBI:57540"/>
    </ligand>
</feature>
<feature type="binding site" evidence="1">
    <location>
        <position position="135"/>
    </location>
    <ligand>
        <name>(S)-2,3,4,5-tetrahydrodipicolinate</name>
        <dbReference type="ChEBI" id="CHEBI:16845"/>
    </ligand>
</feature>
<feature type="binding site" evidence="1">
    <location>
        <begin position="144"/>
        <end position="145"/>
    </location>
    <ligand>
        <name>(S)-2,3,4,5-tetrahydrodipicolinate</name>
        <dbReference type="ChEBI" id="CHEBI:16845"/>
    </ligand>
</feature>